<feature type="chain" id="PRO_1000196690" description="S-adenosylmethionine synthase">
    <location>
        <begin position="1"/>
        <end position="408"/>
    </location>
</feature>
<feature type="region of interest" description="Flexible loop" evidence="1">
    <location>
        <begin position="100"/>
        <end position="110"/>
    </location>
</feature>
<feature type="binding site" description="in other chain" evidence="1">
    <location>
        <position position="16"/>
    </location>
    <ligand>
        <name>ATP</name>
        <dbReference type="ChEBI" id="CHEBI:30616"/>
        <note>ligand shared between two neighboring subunits</note>
    </ligand>
</feature>
<feature type="binding site" evidence="1">
    <location>
        <position position="18"/>
    </location>
    <ligand>
        <name>Mg(2+)</name>
        <dbReference type="ChEBI" id="CHEBI:18420"/>
    </ligand>
</feature>
<feature type="binding site" evidence="1">
    <location>
        <position position="44"/>
    </location>
    <ligand>
        <name>K(+)</name>
        <dbReference type="ChEBI" id="CHEBI:29103"/>
    </ligand>
</feature>
<feature type="binding site" description="in other chain" evidence="1">
    <location>
        <position position="57"/>
    </location>
    <ligand>
        <name>L-methionine</name>
        <dbReference type="ChEBI" id="CHEBI:57844"/>
        <note>ligand shared between two neighboring subunits</note>
    </ligand>
</feature>
<feature type="binding site" description="in other chain" evidence="1">
    <location>
        <position position="100"/>
    </location>
    <ligand>
        <name>L-methionine</name>
        <dbReference type="ChEBI" id="CHEBI:57844"/>
        <note>ligand shared between two neighboring subunits</note>
    </ligand>
</feature>
<feature type="binding site" description="in other chain" evidence="1">
    <location>
        <begin position="177"/>
        <end position="179"/>
    </location>
    <ligand>
        <name>ATP</name>
        <dbReference type="ChEBI" id="CHEBI:30616"/>
        <note>ligand shared between two neighboring subunits</note>
    </ligand>
</feature>
<feature type="binding site" evidence="1">
    <location>
        <position position="257"/>
    </location>
    <ligand>
        <name>ATP</name>
        <dbReference type="ChEBI" id="CHEBI:30616"/>
        <note>ligand shared between two neighboring subunits</note>
    </ligand>
</feature>
<feature type="binding site" evidence="1">
    <location>
        <position position="257"/>
    </location>
    <ligand>
        <name>L-methionine</name>
        <dbReference type="ChEBI" id="CHEBI:57844"/>
        <note>ligand shared between two neighboring subunits</note>
    </ligand>
</feature>
<feature type="binding site" description="in other chain" evidence="1">
    <location>
        <begin position="263"/>
        <end position="264"/>
    </location>
    <ligand>
        <name>ATP</name>
        <dbReference type="ChEBI" id="CHEBI:30616"/>
        <note>ligand shared between two neighboring subunits</note>
    </ligand>
</feature>
<feature type="binding site" evidence="1">
    <location>
        <position position="280"/>
    </location>
    <ligand>
        <name>ATP</name>
        <dbReference type="ChEBI" id="CHEBI:30616"/>
        <note>ligand shared between two neighboring subunits</note>
    </ligand>
</feature>
<feature type="binding site" evidence="1">
    <location>
        <position position="284"/>
    </location>
    <ligand>
        <name>ATP</name>
        <dbReference type="ChEBI" id="CHEBI:30616"/>
        <note>ligand shared between two neighboring subunits</note>
    </ligand>
</feature>
<feature type="binding site" description="in other chain" evidence="1">
    <location>
        <position position="288"/>
    </location>
    <ligand>
        <name>L-methionine</name>
        <dbReference type="ChEBI" id="CHEBI:57844"/>
        <note>ligand shared between two neighboring subunits</note>
    </ligand>
</feature>
<proteinExistence type="inferred from homology"/>
<keyword id="KW-0067">ATP-binding</keyword>
<keyword id="KW-0963">Cytoplasm</keyword>
<keyword id="KW-0460">Magnesium</keyword>
<keyword id="KW-0479">Metal-binding</keyword>
<keyword id="KW-0547">Nucleotide-binding</keyword>
<keyword id="KW-0554">One-carbon metabolism</keyword>
<keyword id="KW-0630">Potassium</keyword>
<keyword id="KW-1185">Reference proteome</keyword>
<keyword id="KW-0808">Transferase</keyword>
<reference key="1">
    <citation type="journal article" date="2009" name="J. Bacteriol.">
        <title>Genome sequence of the probiotic bacterium Bifidobacterium animalis subsp. lactis AD011.</title>
        <authorList>
            <person name="Kim J.F."/>
            <person name="Jeong H."/>
            <person name="Yu D.S."/>
            <person name="Choi S.-H."/>
            <person name="Hur C.-G."/>
            <person name="Park M.-S."/>
            <person name="Yoon S.H."/>
            <person name="Kim D.-W."/>
            <person name="Ji G.E."/>
            <person name="Park H.-S."/>
            <person name="Oh T.K."/>
        </authorList>
    </citation>
    <scope>NUCLEOTIDE SEQUENCE [LARGE SCALE GENOMIC DNA]</scope>
    <source>
        <strain>AD011</strain>
    </source>
</reference>
<organism>
    <name type="scientific">Bifidobacterium animalis subsp. lactis (strain AD011)</name>
    <dbReference type="NCBI Taxonomy" id="442563"/>
    <lineage>
        <taxon>Bacteria</taxon>
        <taxon>Bacillati</taxon>
        <taxon>Actinomycetota</taxon>
        <taxon>Actinomycetes</taxon>
        <taxon>Bifidobacteriales</taxon>
        <taxon>Bifidobacteriaceae</taxon>
        <taxon>Bifidobacterium</taxon>
    </lineage>
</organism>
<protein>
    <recommendedName>
        <fullName evidence="1">S-adenosylmethionine synthase</fullName>
        <shortName evidence="1">AdoMet synthase</shortName>
        <ecNumber evidence="1">2.5.1.6</ecNumber>
    </recommendedName>
    <alternativeName>
        <fullName evidence="1">MAT</fullName>
    </alternativeName>
    <alternativeName>
        <fullName evidence="1">Methionine adenosyltransferase</fullName>
    </alternativeName>
</protein>
<comment type="function">
    <text evidence="1">Catalyzes the formation of S-adenosylmethionine (AdoMet) from methionine and ATP. The overall synthetic reaction is composed of two sequential steps, AdoMet formation and the subsequent tripolyphosphate hydrolysis which occurs prior to release of AdoMet from the enzyme.</text>
</comment>
<comment type="catalytic activity">
    <reaction evidence="1">
        <text>L-methionine + ATP + H2O = S-adenosyl-L-methionine + phosphate + diphosphate</text>
        <dbReference type="Rhea" id="RHEA:21080"/>
        <dbReference type="ChEBI" id="CHEBI:15377"/>
        <dbReference type="ChEBI" id="CHEBI:30616"/>
        <dbReference type="ChEBI" id="CHEBI:33019"/>
        <dbReference type="ChEBI" id="CHEBI:43474"/>
        <dbReference type="ChEBI" id="CHEBI:57844"/>
        <dbReference type="ChEBI" id="CHEBI:59789"/>
        <dbReference type="EC" id="2.5.1.6"/>
    </reaction>
</comment>
<comment type="cofactor">
    <cofactor evidence="1">
        <name>Mg(2+)</name>
        <dbReference type="ChEBI" id="CHEBI:18420"/>
    </cofactor>
    <text evidence="1">Binds 2 divalent ions per subunit.</text>
</comment>
<comment type="cofactor">
    <cofactor evidence="1">
        <name>K(+)</name>
        <dbReference type="ChEBI" id="CHEBI:29103"/>
    </cofactor>
    <text evidence="1">Binds 1 potassium ion per subunit.</text>
</comment>
<comment type="pathway">
    <text evidence="1">Amino-acid biosynthesis; S-adenosyl-L-methionine biosynthesis; S-adenosyl-L-methionine from L-methionine: step 1/1.</text>
</comment>
<comment type="subunit">
    <text evidence="1">Homotetramer; dimer of dimers.</text>
</comment>
<comment type="subcellular location">
    <subcellularLocation>
        <location evidence="1">Cytoplasm</location>
    </subcellularLocation>
</comment>
<comment type="similarity">
    <text evidence="1">Belongs to the AdoMet synthase family.</text>
</comment>
<dbReference type="EC" id="2.5.1.6" evidence="1"/>
<dbReference type="EMBL" id="CP001213">
    <property type="protein sequence ID" value="ACL29447.1"/>
    <property type="molecule type" value="Genomic_DNA"/>
</dbReference>
<dbReference type="RefSeq" id="WP_004218890.1">
    <property type="nucleotide sequence ID" value="NC_011835.1"/>
</dbReference>
<dbReference type="SMR" id="B8DTW8"/>
<dbReference type="STRING" id="442563.BLA_1159"/>
<dbReference type="GeneID" id="29695891"/>
<dbReference type="KEGG" id="bla:BLA_1159"/>
<dbReference type="HOGENOM" id="CLU_041802_1_1_11"/>
<dbReference type="UniPathway" id="UPA00315">
    <property type="reaction ID" value="UER00080"/>
</dbReference>
<dbReference type="Proteomes" id="UP000002456">
    <property type="component" value="Chromosome"/>
</dbReference>
<dbReference type="GO" id="GO:0005737">
    <property type="term" value="C:cytoplasm"/>
    <property type="evidence" value="ECO:0007669"/>
    <property type="project" value="UniProtKB-SubCell"/>
</dbReference>
<dbReference type="GO" id="GO:0005524">
    <property type="term" value="F:ATP binding"/>
    <property type="evidence" value="ECO:0007669"/>
    <property type="project" value="UniProtKB-UniRule"/>
</dbReference>
<dbReference type="GO" id="GO:0000287">
    <property type="term" value="F:magnesium ion binding"/>
    <property type="evidence" value="ECO:0007669"/>
    <property type="project" value="UniProtKB-UniRule"/>
</dbReference>
<dbReference type="GO" id="GO:0004478">
    <property type="term" value="F:methionine adenosyltransferase activity"/>
    <property type="evidence" value="ECO:0007669"/>
    <property type="project" value="UniProtKB-UniRule"/>
</dbReference>
<dbReference type="GO" id="GO:0006730">
    <property type="term" value="P:one-carbon metabolic process"/>
    <property type="evidence" value="ECO:0007669"/>
    <property type="project" value="UniProtKB-KW"/>
</dbReference>
<dbReference type="GO" id="GO:0006556">
    <property type="term" value="P:S-adenosylmethionine biosynthetic process"/>
    <property type="evidence" value="ECO:0007669"/>
    <property type="project" value="UniProtKB-UniRule"/>
</dbReference>
<dbReference type="CDD" id="cd18079">
    <property type="entry name" value="S-AdoMet_synt"/>
    <property type="match status" value="1"/>
</dbReference>
<dbReference type="FunFam" id="3.30.300.10:FF:000003">
    <property type="entry name" value="S-adenosylmethionine synthase"/>
    <property type="match status" value="1"/>
</dbReference>
<dbReference type="FunFam" id="3.30.300.10:FF:000004">
    <property type="entry name" value="S-adenosylmethionine synthase"/>
    <property type="match status" value="1"/>
</dbReference>
<dbReference type="Gene3D" id="3.30.300.10">
    <property type="match status" value="3"/>
</dbReference>
<dbReference type="HAMAP" id="MF_00086">
    <property type="entry name" value="S_AdoMet_synth1"/>
    <property type="match status" value="1"/>
</dbReference>
<dbReference type="InterPro" id="IPR022631">
    <property type="entry name" value="ADOMET_SYNTHASE_CS"/>
</dbReference>
<dbReference type="InterPro" id="IPR022630">
    <property type="entry name" value="S-AdoMet_synt_C"/>
</dbReference>
<dbReference type="InterPro" id="IPR022629">
    <property type="entry name" value="S-AdoMet_synt_central"/>
</dbReference>
<dbReference type="InterPro" id="IPR022628">
    <property type="entry name" value="S-AdoMet_synt_N"/>
</dbReference>
<dbReference type="InterPro" id="IPR002133">
    <property type="entry name" value="S-AdoMet_synthetase"/>
</dbReference>
<dbReference type="InterPro" id="IPR022636">
    <property type="entry name" value="S-AdoMet_synthetase_sfam"/>
</dbReference>
<dbReference type="NCBIfam" id="TIGR01034">
    <property type="entry name" value="metK"/>
    <property type="match status" value="1"/>
</dbReference>
<dbReference type="PANTHER" id="PTHR11964">
    <property type="entry name" value="S-ADENOSYLMETHIONINE SYNTHETASE"/>
    <property type="match status" value="1"/>
</dbReference>
<dbReference type="Pfam" id="PF02773">
    <property type="entry name" value="S-AdoMet_synt_C"/>
    <property type="match status" value="1"/>
</dbReference>
<dbReference type="Pfam" id="PF02772">
    <property type="entry name" value="S-AdoMet_synt_M"/>
    <property type="match status" value="1"/>
</dbReference>
<dbReference type="Pfam" id="PF00438">
    <property type="entry name" value="S-AdoMet_synt_N"/>
    <property type="match status" value="1"/>
</dbReference>
<dbReference type="PIRSF" id="PIRSF000497">
    <property type="entry name" value="MAT"/>
    <property type="match status" value="1"/>
</dbReference>
<dbReference type="SUPFAM" id="SSF55973">
    <property type="entry name" value="S-adenosylmethionine synthetase"/>
    <property type="match status" value="3"/>
</dbReference>
<dbReference type="PROSITE" id="PS00376">
    <property type="entry name" value="ADOMET_SYNTHASE_1"/>
    <property type="match status" value="1"/>
</dbReference>
<dbReference type="PROSITE" id="PS00377">
    <property type="entry name" value="ADOMET_SYNTHASE_2"/>
    <property type="match status" value="1"/>
</dbReference>
<name>METK_BIFA0</name>
<evidence type="ECO:0000255" key="1">
    <source>
        <dbReference type="HAMAP-Rule" id="MF_00086"/>
    </source>
</evidence>
<gene>
    <name evidence="1" type="primary">metK</name>
    <name type="ordered locus">BLA_1159</name>
</gene>
<accession>B8DTW8</accession>
<sequence>MAEVKLISAESVTEGHPDKICDQISDAILDDMLRQDPHSHVAVETSATKGQFWVFGEVTSKGYSDIQSIVRDTVRRIGYTSSVIGLDADSCGVLVSLSEQSPEINQGVSRIDSDRENAVSREERYEAQGAGDQGVMFGYASDETDVLMPLPIHLAHRLAYRLAEVRKNGEVKFLRPDGKTQVTIEYDEENRPLRVDTVLISTQHDPEVSQEALREDLREHVIEPVLDEVLGDAVKHDDYRVLVNPTGSFIMGGPAADAGLTGRKIIVDTYGGAAHHGGGAFSGKDPSKVDRSAAYAARWVAKNIVAAGLAHKVEVQVAYAIGVAEPVSINVETYGTEADGVTREQIQEAVRKVFDLRPAAIVDELDLLRPIYSKTAAYGHFGREDDDFTWEHTNKVDELKRAIATLVD</sequence>